<evidence type="ECO:0000305" key="1"/>
<organism>
    <name type="scientific">Vibrio parahaemolyticus serotype O3:K6 (strain RIMD 2210633)</name>
    <dbReference type="NCBI Taxonomy" id="223926"/>
    <lineage>
        <taxon>Bacteria</taxon>
        <taxon>Pseudomonadati</taxon>
        <taxon>Pseudomonadota</taxon>
        <taxon>Gammaproteobacteria</taxon>
        <taxon>Vibrionales</taxon>
        <taxon>Vibrionaceae</taxon>
        <taxon>Vibrio</taxon>
    </lineage>
</organism>
<accession>P46234</accession>
<dbReference type="EMBL" id="U06949">
    <property type="protein sequence ID" value="AAA21575.1"/>
    <property type="molecule type" value="Genomic_DNA"/>
</dbReference>
<dbReference type="EMBL" id="BA000031">
    <property type="protein sequence ID" value="BAC60373.1"/>
    <property type="molecule type" value="Genomic_DNA"/>
</dbReference>
<dbReference type="RefSeq" id="NP_798489.1">
    <property type="nucleotide sequence ID" value="NC_004603.1"/>
</dbReference>
<dbReference type="RefSeq" id="WP_005490627.1">
    <property type="nucleotide sequence ID" value="NC_004603.1"/>
</dbReference>
<dbReference type="SMR" id="P46234"/>
<dbReference type="GeneID" id="1189622"/>
<dbReference type="KEGG" id="vpa:VP2110"/>
<dbReference type="PATRIC" id="fig|223926.6.peg.2020"/>
<dbReference type="eggNOG" id="ENOG50340FI">
    <property type="taxonomic scope" value="Bacteria"/>
</dbReference>
<dbReference type="HOGENOM" id="CLU_1776697_0_0_6"/>
<dbReference type="Proteomes" id="UP000002493">
    <property type="component" value="Chromosome 1"/>
</dbReference>
<dbReference type="InterPro" id="IPR020206">
    <property type="entry name" value="Uncharacterised_VP2110"/>
</dbReference>
<dbReference type="Pfam" id="PF10952">
    <property type="entry name" value="DUF2753"/>
    <property type="match status" value="1"/>
</dbReference>
<sequence>MISEWEKHTLLADTALQLDDPVRSILHYQQALSLSEDISECVEIEADERLLISVISCHNLAQFWRWAGDTEYELKYLQLASEKVLTLIPQCPNQNCASFIDSIGCCTKALIDFMKRHPNPAIAKQVEKIDTATNCEVIAKFRLN</sequence>
<protein>
    <recommendedName>
        <fullName>Uncharacterized protein VP2110</fullName>
    </recommendedName>
    <alternativeName>
        <fullName>ORF2</fullName>
    </alternativeName>
</protein>
<reference key="1">
    <citation type="journal article" date="1994" name="J. Bacteriol.">
        <title>MotY, a component of the sodium-type flagellar motor.</title>
        <authorList>
            <person name="McCarter L.L."/>
        </authorList>
    </citation>
    <scope>NUCLEOTIDE SEQUENCE [GENOMIC DNA]</scope>
    <source>
        <strain>BB22</strain>
    </source>
</reference>
<reference key="2">
    <citation type="journal article" date="2003" name="Lancet">
        <title>Genome sequence of Vibrio parahaemolyticus: a pathogenic mechanism distinct from that of V. cholerae.</title>
        <authorList>
            <person name="Makino K."/>
            <person name="Oshima K."/>
            <person name="Kurokawa K."/>
            <person name="Yokoyama K."/>
            <person name="Uda T."/>
            <person name="Tagomori K."/>
            <person name="Iijima Y."/>
            <person name="Najima M."/>
            <person name="Nakano M."/>
            <person name="Yamashita A."/>
            <person name="Kubota Y."/>
            <person name="Kimura S."/>
            <person name="Yasunaga T."/>
            <person name="Honda T."/>
            <person name="Shinagawa H."/>
            <person name="Hattori M."/>
            <person name="Iida T."/>
        </authorList>
    </citation>
    <scope>NUCLEOTIDE SEQUENCE [LARGE SCALE GENOMIC DNA]</scope>
    <source>
        <strain>RIMD 2210633</strain>
    </source>
</reference>
<proteinExistence type="predicted"/>
<feature type="chain" id="PRO_0000066081" description="Uncharacterized protein VP2110">
    <location>
        <begin position="1"/>
        <end position="144"/>
    </location>
</feature>
<feature type="sequence conflict" description="In Ref. 1; AAA21575." evidence="1" ref="1">
    <original>A</original>
    <variation>D</variation>
    <location>
        <position position="31"/>
    </location>
</feature>
<gene>
    <name type="ordered locus">VP2110</name>
</gene>
<name>Y2110_VIBPA</name>